<feature type="initiator methionine" description="Removed" evidence="2 3">
    <location>
        <position position="1"/>
    </location>
</feature>
<feature type="chain" id="PRO_0000204411" description="Photosystem I reaction center subunit IV">
    <location>
        <begin position="2"/>
        <end position="75"/>
    </location>
</feature>
<feature type="sequence conflict" description="In Ref. 4; AA sequence." evidence="4" ref="4">
    <original>Q</original>
    <variation>E</variation>
    <location>
        <position position="30"/>
    </location>
</feature>
<proteinExistence type="evidence at protein level"/>
<sequence>MAIARGDKVRILRPESYWFNEVGTVASVDQSGIKYPVVVRFEKVNYNGFSGSDGGVNTNNFAEAELQVVAAAAKK</sequence>
<protein>
    <recommendedName>
        <fullName>Photosystem I reaction center subunit IV</fullName>
    </recommendedName>
    <alternativeName>
        <fullName>Photosystem I 8.1 kDa protein</fullName>
    </alternativeName>
    <alternativeName>
        <fullName>p30 protein</fullName>
    </alternativeName>
</protein>
<accession>P23077</accession>
<organism>
    <name type="scientific">Synechococcus sp. (strain ATCC 27144 / PCC 6301 / SAUG 1402/1)</name>
    <name type="common">Anacystis nidulans</name>
    <dbReference type="NCBI Taxonomy" id="269084"/>
    <lineage>
        <taxon>Bacteria</taxon>
        <taxon>Bacillati</taxon>
        <taxon>Cyanobacteriota</taxon>
        <taxon>Cyanophyceae</taxon>
        <taxon>Synechococcales</taxon>
        <taxon>Synechococcaceae</taxon>
        <taxon>Synechococcus</taxon>
    </lineage>
</organism>
<reference key="1">
    <citation type="journal article" date="1993" name="Plant Physiol.">
        <title>Nucleotide sequence of the psaE gene of cyanobacterium Synechococcus sp. PCC 6301.</title>
        <authorList>
            <person name="Rhiel E."/>
            <person name="Bryant D.A."/>
        </authorList>
    </citation>
    <scope>NUCLEOTIDE SEQUENCE [GENOMIC DNA]</scope>
</reference>
<reference key="2">
    <citation type="book" date="1990" name="Current research in photosynthesis">
        <editorList>
            <person name="Baltscheffsky M."/>
        </editorList>
        <authorList>
            <person name="Bryant D.A."/>
            <person name="Rhiel E."/>
            <person name="de Lorimier R."/>
            <person name="Zhou J."/>
            <person name="Stirewalt V.L."/>
            <person name="Gasparich G.E."/>
            <person name="Dubbs J.M."/>
            <person name="Snyder W."/>
        </authorList>
    </citation>
    <scope>NUCLEOTIDE SEQUENCE [GENOMIC DNA]</scope>
</reference>
<reference key="3">
    <citation type="journal article" date="2007" name="Photosyn. Res.">
        <title>Complete nucleotide sequence of the freshwater unicellular cyanobacterium Synechococcus elongatus PCC 6301 chromosome: gene content and organization.</title>
        <authorList>
            <person name="Sugita C."/>
            <person name="Ogata K."/>
            <person name="Shikata M."/>
            <person name="Jikuya H."/>
            <person name="Takano J."/>
            <person name="Furumichi M."/>
            <person name="Kanehisa M."/>
            <person name="Omata T."/>
            <person name="Sugiura M."/>
            <person name="Sugita M."/>
        </authorList>
    </citation>
    <scope>NUCLEOTIDE SEQUENCE [LARGE SCALE GENOMIC DNA]</scope>
    <source>
        <strain>ATCC 27144 / PCC 6301 / SAUG 1402/1</strain>
    </source>
</reference>
<reference key="4">
    <citation type="journal article" date="1988" name="Arch. Microbiol.">
        <title>Structural studies on cyanobacterial photosystem I. Purification and characterization of two low molecular weight polypeptides.</title>
        <authorList>
            <person name="Alhadeff M."/>
            <person name="Lundell D.J."/>
            <person name="Glazer A.N."/>
        </authorList>
    </citation>
    <scope>PROTEIN SEQUENCE OF 2-43</scope>
</reference>
<reference key="5">
    <citation type="journal article" date="1991" name="Biochim. Biophys. Acta">
        <title>Polypeptide composition of the Photosystem I complex and the Photosystem I core protein from Synechococcus sp. PCC 6301.</title>
        <authorList>
            <person name="Li N."/>
            <person name="Warren P.V."/>
            <person name="Golbeck J.H."/>
            <person name="Frank G."/>
            <person name="Zuber H."/>
            <person name="Bryant D.A."/>
        </authorList>
    </citation>
    <scope>PROTEIN SEQUENCE OF 2-19</scope>
</reference>
<comment type="function">
    <text>Stabilizes the interaction between PsaC and the PSI core, assists the docking of the ferredoxin to PSI and interacts with ferredoxin-NADP oxidoreductase.</text>
</comment>
<comment type="subcellular location">
    <subcellularLocation>
        <location evidence="1">Cellular thylakoid membrane</location>
        <topology evidence="1">Peripheral membrane protein</topology>
    </subcellularLocation>
</comment>
<comment type="similarity">
    <text evidence="4">Belongs to the PsaE family.</text>
</comment>
<dbReference type="EMBL" id="M99432">
    <property type="protein sequence ID" value="AAA18568.1"/>
    <property type="molecule type" value="Genomic_DNA"/>
</dbReference>
<dbReference type="EMBL" id="AP008231">
    <property type="protein sequence ID" value="BAD78421.1"/>
    <property type="molecule type" value="Genomic_DNA"/>
</dbReference>
<dbReference type="PIR" id="PL0035">
    <property type="entry name" value="PL0035"/>
</dbReference>
<dbReference type="RefSeq" id="WP_011242545.1">
    <property type="nucleotide sequence ID" value="NZ_CP085785.1"/>
</dbReference>
<dbReference type="SMR" id="P23077"/>
<dbReference type="KEGG" id="syc:syc0231_c"/>
<dbReference type="eggNOG" id="ENOG503313D">
    <property type="taxonomic scope" value="Bacteria"/>
</dbReference>
<dbReference type="Proteomes" id="UP000001175">
    <property type="component" value="Chromosome"/>
</dbReference>
<dbReference type="GO" id="GO:0009538">
    <property type="term" value="C:photosystem I reaction center"/>
    <property type="evidence" value="ECO:0007669"/>
    <property type="project" value="InterPro"/>
</dbReference>
<dbReference type="GO" id="GO:0031676">
    <property type="term" value="C:plasma membrane-derived thylakoid membrane"/>
    <property type="evidence" value="ECO:0007669"/>
    <property type="project" value="UniProtKB-SubCell"/>
</dbReference>
<dbReference type="GO" id="GO:0015979">
    <property type="term" value="P:photosynthesis"/>
    <property type="evidence" value="ECO:0007669"/>
    <property type="project" value="UniProtKB-UniRule"/>
</dbReference>
<dbReference type="Gene3D" id="2.30.30.50">
    <property type="match status" value="1"/>
</dbReference>
<dbReference type="HAMAP" id="MF_00613">
    <property type="entry name" value="PSI_PsaE"/>
    <property type="match status" value="1"/>
</dbReference>
<dbReference type="InterPro" id="IPR008990">
    <property type="entry name" value="Elect_transpt_acc-like_dom_sf"/>
</dbReference>
<dbReference type="InterPro" id="IPR003375">
    <property type="entry name" value="PSI_PsaE"/>
</dbReference>
<dbReference type="NCBIfam" id="NF002745">
    <property type="entry name" value="PRK02749.1"/>
    <property type="match status" value="1"/>
</dbReference>
<dbReference type="PANTHER" id="PTHR34549">
    <property type="entry name" value="PHOTOSYSTEM I REACTION CENTER SUBUNIT IV A, CHLOROPLASTIC-RELATED"/>
    <property type="match status" value="1"/>
</dbReference>
<dbReference type="PANTHER" id="PTHR34549:SF2">
    <property type="entry name" value="PHOTOSYSTEM I SUBUNIT IV"/>
    <property type="match status" value="1"/>
</dbReference>
<dbReference type="Pfam" id="PF02427">
    <property type="entry name" value="PSI_PsaE"/>
    <property type="match status" value="1"/>
</dbReference>
<dbReference type="SUPFAM" id="SSF50090">
    <property type="entry name" value="Electron transport accessory proteins"/>
    <property type="match status" value="1"/>
</dbReference>
<evidence type="ECO:0000250" key="1"/>
<evidence type="ECO:0000269" key="2">
    <source>
    </source>
</evidence>
<evidence type="ECO:0000269" key="3">
    <source ref="4"/>
</evidence>
<evidence type="ECO:0000305" key="4"/>
<name>PSAE_SYNP6</name>
<keyword id="KW-0903">Direct protein sequencing</keyword>
<keyword id="KW-0472">Membrane</keyword>
<keyword id="KW-0602">Photosynthesis</keyword>
<keyword id="KW-0603">Photosystem I</keyword>
<keyword id="KW-0793">Thylakoid</keyword>
<gene>
    <name type="primary">psaE</name>
    <name type="ordered locus">syc0231_c</name>
</gene>